<evidence type="ECO:0000255" key="1">
    <source>
        <dbReference type="HAMAP-Rule" id="MF_00436"/>
    </source>
</evidence>
<evidence type="ECO:0000255" key="2">
    <source>
        <dbReference type="PROSITE-ProRule" id="PRU01346"/>
    </source>
</evidence>
<feature type="chain" id="PRO_1000135022" description="RNA-binding protein Hfq">
    <location>
        <begin position="1"/>
        <end position="78"/>
    </location>
</feature>
<feature type="domain" description="Sm" evidence="2">
    <location>
        <begin position="10"/>
        <end position="70"/>
    </location>
</feature>
<dbReference type="EMBL" id="CP001488">
    <property type="protein sequence ID" value="ACO00891.1"/>
    <property type="molecule type" value="Genomic_DNA"/>
</dbReference>
<dbReference type="RefSeq" id="WP_002964239.1">
    <property type="nucleotide sequence ID" value="NC_012441.1"/>
</dbReference>
<dbReference type="SMR" id="C0RJ83"/>
<dbReference type="GeneID" id="97533634"/>
<dbReference type="KEGG" id="bmi:BMEA_A1156"/>
<dbReference type="HOGENOM" id="CLU_113688_0_0_5"/>
<dbReference type="PRO" id="PR:C0RJ83"/>
<dbReference type="Proteomes" id="UP000001748">
    <property type="component" value="Chromosome I"/>
</dbReference>
<dbReference type="GO" id="GO:0005829">
    <property type="term" value="C:cytosol"/>
    <property type="evidence" value="ECO:0007669"/>
    <property type="project" value="TreeGrafter"/>
</dbReference>
<dbReference type="GO" id="GO:0003723">
    <property type="term" value="F:RNA binding"/>
    <property type="evidence" value="ECO:0007669"/>
    <property type="project" value="UniProtKB-UniRule"/>
</dbReference>
<dbReference type="GO" id="GO:0006355">
    <property type="term" value="P:regulation of DNA-templated transcription"/>
    <property type="evidence" value="ECO:0007669"/>
    <property type="project" value="InterPro"/>
</dbReference>
<dbReference type="GO" id="GO:0043487">
    <property type="term" value="P:regulation of RNA stability"/>
    <property type="evidence" value="ECO:0007669"/>
    <property type="project" value="TreeGrafter"/>
</dbReference>
<dbReference type="GO" id="GO:0045974">
    <property type="term" value="P:regulation of translation, ncRNA-mediated"/>
    <property type="evidence" value="ECO:0007669"/>
    <property type="project" value="TreeGrafter"/>
</dbReference>
<dbReference type="CDD" id="cd01716">
    <property type="entry name" value="Hfq"/>
    <property type="match status" value="1"/>
</dbReference>
<dbReference type="Gene3D" id="2.30.30.100">
    <property type="match status" value="1"/>
</dbReference>
<dbReference type="HAMAP" id="MF_00436">
    <property type="entry name" value="Hfq"/>
    <property type="match status" value="1"/>
</dbReference>
<dbReference type="InterPro" id="IPR005001">
    <property type="entry name" value="Hfq"/>
</dbReference>
<dbReference type="InterPro" id="IPR010920">
    <property type="entry name" value="LSM_dom_sf"/>
</dbReference>
<dbReference type="InterPro" id="IPR047575">
    <property type="entry name" value="Sm"/>
</dbReference>
<dbReference type="NCBIfam" id="TIGR02383">
    <property type="entry name" value="Hfq"/>
    <property type="match status" value="1"/>
</dbReference>
<dbReference type="NCBIfam" id="NF001602">
    <property type="entry name" value="PRK00395.1"/>
    <property type="match status" value="1"/>
</dbReference>
<dbReference type="PANTHER" id="PTHR34772">
    <property type="entry name" value="RNA-BINDING PROTEIN HFQ"/>
    <property type="match status" value="1"/>
</dbReference>
<dbReference type="PANTHER" id="PTHR34772:SF1">
    <property type="entry name" value="RNA-BINDING PROTEIN HFQ"/>
    <property type="match status" value="1"/>
</dbReference>
<dbReference type="Pfam" id="PF17209">
    <property type="entry name" value="Hfq"/>
    <property type="match status" value="1"/>
</dbReference>
<dbReference type="SUPFAM" id="SSF50182">
    <property type="entry name" value="Sm-like ribonucleoproteins"/>
    <property type="match status" value="1"/>
</dbReference>
<dbReference type="PROSITE" id="PS52002">
    <property type="entry name" value="SM"/>
    <property type="match status" value="1"/>
</dbReference>
<keyword id="KW-0694">RNA-binding</keyword>
<keyword id="KW-0346">Stress response</keyword>
<reference key="1">
    <citation type="submission" date="2009-03" db="EMBL/GenBank/DDBJ databases">
        <title>Brucella melitensis ATCC 23457 whole genome shotgun sequencing project.</title>
        <authorList>
            <person name="Setubal J.C."/>
            <person name="Boyle S."/>
            <person name="Crasta O.R."/>
            <person name="Gillespie J.J."/>
            <person name="Kenyon R.W."/>
            <person name="Lu J."/>
            <person name="Mane S."/>
            <person name="Nagrani S."/>
            <person name="Shallom J.M."/>
            <person name="Shallom S."/>
            <person name="Shukla M."/>
            <person name="Snyder E.E."/>
            <person name="Sobral B.W."/>
            <person name="Wattam A.R."/>
            <person name="Will R."/>
            <person name="Williams K."/>
            <person name="Yoo H."/>
            <person name="Munk C."/>
            <person name="Tapia R."/>
            <person name="Han C."/>
            <person name="Detter J.C."/>
            <person name="Bruce D."/>
            <person name="Brettin T.S."/>
        </authorList>
    </citation>
    <scope>NUCLEOTIDE SEQUENCE [LARGE SCALE GENOMIC DNA]</scope>
    <source>
        <strain>ATCC 23457</strain>
    </source>
</reference>
<comment type="function">
    <text evidence="1">RNA chaperone that binds small regulatory RNA (sRNAs) and mRNAs to facilitate mRNA translational regulation in response to envelope stress, environmental stress and changes in metabolite concentrations. Also binds with high specificity to tRNAs.</text>
</comment>
<comment type="subunit">
    <text evidence="1">Homohexamer.</text>
</comment>
<comment type="similarity">
    <text evidence="1">Belongs to the Hfq family.</text>
</comment>
<proteinExistence type="inferred from homology"/>
<name>HFQ_BRUMB</name>
<protein>
    <recommendedName>
        <fullName evidence="1">RNA-binding protein Hfq</fullName>
    </recommendedName>
</protein>
<sequence>MAERSQNLQDLFLNSVRKQKISLTIFLINGVKLTGIVTSFDNFCVLLRRDGHSQLVYKHAISTIMPSQPVQMFEGEEA</sequence>
<gene>
    <name evidence="1" type="primary">hfq</name>
    <name type="ordered locus">BMEA_A1156</name>
</gene>
<organism>
    <name type="scientific">Brucella melitensis biotype 2 (strain ATCC 23457)</name>
    <dbReference type="NCBI Taxonomy" id="546272"/>
    <lineage>
        <taxon>Bacteria</taxon>
        <taxon>Pseudomonadati</taxon>
        <taxon>Pseudomonadota</taxon>
        <taxon>Alphaproteobacteria</taxon>
        <taxon>Hyphomicrobiales</taxon>
        <taxon>Brucellaceae</taxon>
        <taxon>Brucella/Ochrobactrum group</taxon>
        <taxon>Brucella</taxon>
    </lineage>
</organism>
<accession>C0RJ83</accession>